<proteinExistence type="inferred from homology"/>
<name>CYAY_DELAS</name>
<accession>A9BXD6</accession>
<dbReference type="EMBL" id="CP000884">
    <property type="protein sequence ID" value="ABX38212.1"/>
    <property type="molecule type" value="Genomic_DNA"/>
</dbReference>
<dbReference type="RefSeq" id="WP_012207381.1">
    <property type="nucleotide sequence ID" value="NC_010002.1"/>
</dbReference>
<dbReference type="SMR" id="A9BXD6"/>
<dbReference type="STRING" id="398578.Daci_5583"/>
<dbReference type="GeneID" id="24114841"/>
<dbReference type="KEGG" id="dac:Daci_5583"/>
<dbReference type="eggNOG" id="COG1965">
    <property type="taxonomic scope" value="Bacteria"/>
</dbReference>
<dbReference type="HOGENOM" id="CLU_080880_3_0_4"/>
<dbReference type="Proteomes" id="UP000000784">
    <property type="component" value="Chromosome"/>
</dbReference>
<dbReference type="GO" id="GO:0005829">
    <property type="term" value="C:cytosol"/>
    <property type="evidence" value="ECO:0007669"/>
    <property type="project" value="TreeGrafter"/>
</dbReference>
<dbReference type="GO" id="GO:0008199">
    <property type="term" value="F:ferric iron binding"/>
    <property type="evidence" value="ECO:0007669"/>
    <property type="project" value="InterPro"/>
</dbReference>
<dbReference type="GO" id="GO:0008198">
    <property type="term" value="F:ferrous iron binding"/>
    <property type="evidence" value="ECO:0007669"/>
    <property type="project" value="TreeGrafter"/>
</dbReference>
<dbReference type="GO" id="GO:0016226">
    <property type="term" value="P:iron-sulfur cluster assembly"/>
    <property type="evidence" value="ECO:0007669"/>
    <property type="project" value="UniProtKB-UniRule"/>
</dbReference>
<dbReference type="Gene3D" id="3.30.920.10">
    <property type="entry name" value="Frataxin/CyaY"/>
    <property type="match status" value="1"/>
</dbReference>
<dbReference type="HAMAP" id="MF_00142">
    <property type="entry name" value="CyaY"/>
    <property type="match status" value="1"/>
</dbReference>
<dbReference type="InterPro" id="IPR047584">
    <property type="entry name" value="CyaY"/>
</dbReference>
<dbReference type="InterPro" id="IPR002908">
    <property type="entry name" value="Frataxin/CyaY"/>
</dbReference>
<dbReference type="InterPro" id="IPR036524">
    <property type="entry name" value="Frataxin/CyaY_sf"/>
</dbReference>
<dbReference type="NCBIfam" id="TIGR03421">
    <property type="entry name" value="FeS_CyaY"/>
    <property type="match status" value="1"/>
</dbReference>
<dbReference type="PANTHER" id="PTHR16821">
    <property type="entry name" value="FRATAXIN"/>
    <property type="match status" value="1"/>
</dbReference>
<dbReference type="PANTHER" id="PTHR16821:SF2">
    <property type="entry name" value="FRATAXIN, MITOCHONDRIAL"/>
    <property type="match status" value="1"/>
</dbReference>
<dbReference type="Pfam" id="PF01491">
    <property type="entry name" value="Frataxin_Cyay"/>
    <property type="match status" value="1"/>
</dbReference>
<dbReference type="SMART" id="SM01219">
    <property type="entry name" value="Frataxin_Cyay"/>
    <property type="match status" value="1"/>
</dbReference>
<dbReference type="SUPFAM" id="SSF55387">
    <property type="entry name" value="Frataxin/Nqo15-like"/>
    <property type="match status" value="1"/>
</dbReference>
<dbReference type="PROSITE" id="PS50810">
    <property type="entry name" value="FRATAXIN_2"/>
    <property type="match status" value="1"/>
</dbReference>
<gene>
    <name evidence="1" type="primary">cyaY</name>
    <name type="ordered locus">Daci_5583</name>
</gene>
<evidence type="ECO:0000255" key="1">
    <source>
        <dbReference type="HAMAP-Rule" id="MF_00142"/>
    </source>
</evidence>
<reference key="1">
    <citation type="submission" date="2007-11" db="EMBL/GenBank/DDBJ databases">
        <title>Complete sequence of Delftia acidovorans DSM 14801 / SPH-1.</title>
        <authorList>
            <person name="Copeland A."/>
            <person name="Lucas S."/>
            <person name="Lapidus A."/>
            <person name="Barry K."/>
            <person name="Glavina del Rio T."/>
            <person name="Dalin E."/>
            <person name="Tice H."/>
            <person name="Pitluck S."/>
            <person name="Lowry S."/>
            <person name="Clum A."/>
            <person name="Schmutz J."/>
            <person name="Larimer F."/>
            <person name="Land M."/>
            <person name="Hauser L."/>
            <person name="Kyrpides N."/>
            <person name="Kim E."/>
            <person name="Schleheck D."/>
            <person name="Richardson P."/>
        </authorList>
    </citation>
    <scope>NUCLEOTIDE SEQUENCE [LARGE SCALE GENOMIC DNA]</scope>
    <source>
        <strain>DSM 14801 / SPH-1</strain>
    </source>
</reference>
<protein>
    <recommendedName>
        <fullName evidence="1">Iron-sulfur cluster assembly protein CyaY</fullName>
    </recommendedName>
</protein>
<sequence length="112" mass="12509">MTDQEFLDLAERLLLAVEQDCDRINDETDADLDAQRVGGMVTLVFANRSQIVINQQKPLHEIWLAAKAGGFHYRYDAAQGAWLDTKGAGEFFANLSRYATEQSGLALQFSAR</sequence>
<keyword id="KW-0408">Iron</keyword>
<keyword id="KW-0479">Metal-binding</keyword>
<keyword id="KW-1185">Reference proteome</keyword>
<comment type="function">
    <text evidence="1">Involved in iron-sulfur (Fe-S) cluster assembly. May act as a regulator of Fe-S biogenesis.</text>
</comment>
<comment type="similarity">
    <text evidence="1">Belongs to the frataxin family.</text>
</comment>
<organism>
    <name type="scientific">Delftia acidovorans (strain DSM 14801 / SPH-1)</name>
    <dbReference type="NCBI Taxonomy" id="398578"/>
    <lineage>
        <taxon>Bacteria</taxon>
        <taxon>Pseudomonadati</taxon>
        <taxon>Pseudomonadota</taxon>
        <taxon>Betaproteobacteria</taxon>
        <taxon>Burkholderiales</taxon>
        <taxon>Comamonadaceae</taxon>
        <taxon>Delftia</taxon>
    </lineage>
</organism>
<feature type="chain" id="PRO_1000096243" description="Iron-sulfur cluster assembly protein CyaY">
    <location>
        <begin position="1"/>
        <end position="112"/>
    </location>
</feature>